<protein>
    <recommendedName>
        <fullName>Resuscitation-promoting factor Rpf2</fullName>
        <ecNumber>3.-.-.-</ecNumber>
    </recommendedName>
</protein>
<reference key="1">
    <citation type="journal article" date="2003" name="Appl. Microbiol. Biotechnol.">
        <title>The Corynebacterium glutamicum genome: features and impacts on biotechnological processes.</title>
        <authorList>
            <person name="Ikeda M."/>
            <person name="Nakagawa S."/>
        </authorList>
    </citation>
    <scope>NUCLEOTIDE SEQUENCE [LARGE SCALE GENOMIC DNA]</scope>
    <source>
        <strain>ATCC 13032 / DSM 20300 / JCM 1318 / BCRC 11384 / CCUG 27702 / LMG 3730 / NBRC 12168 / NCIMB 10025 / NRRL B-2784 / 534</strain>
    </source>
</reference>
<reference key="2">
    <citation type="journal article" date="2003" name="J. Biotechnol.">
        <title>The complete Corynebacterium glutamicum ATCC 13032 genome sequence and its impact on the production of L-aspartate-derived amino acids and vitamins.</title>
        <authorList>
            <person name="Kalinowski J."/>
            <person name="Bathe B."/>
            <person name="Bartels D."/>
            <person name="Bischoff N."/>
            <person name="Bott M."/>
            <person name="Burkovski A."/>
            <person name="Dusch N."/>
            <person name="Eggeling L."/>
            <person name="Eikmanns B.J."/>
            <person name="Gaigalat L."/>
            <person name="Goesmann A."/>
            <person name="Hartmann M."/>
            <person name="Huthmacher K."/>
            <person name="Kraemer R."/>
            <person name="Linke B."/>
            <person name="McHardy A.C."/>
            <person name="Meyer F."/>
            <person name="Moeckel B."/>
            <person name="Pfefferle W."/>
            <person name="Puehler A."/>
            <person name="Rey D.A."/>
            <person name="Rueckert C."/>
            <person name="Rupp O."/>
            <person name="Sahm H."/>
            <person name="Wendisch V.F."/>
            <person name="Wiegraebe I."/>
            <person name="Tauch A."/>
        </authorList>
    </citation>
    <scope>NUCLEOTIDE SEQUENCE [LARGE SCALE GENOMIC DNA]</scope>
    <source>
        <strain>ATCC 13032 / DSM 20300 / JCM 1318 / BCRC 11384 / CCUG 27702 / LMG 3730 / NBRC 12168 / NCIMB 10025 / NRRL B-2784 / 534</strain>
    </source>
</reference>
<reference key="3">
    <citation type="journal article" date="2004" name="Arch. Microbiol.">
        <title>The glycosylated cell surface protein Rpf2, containing a resuscitation-promoting factor motif, is involved in intercellular communication of Corynebacterium glutamicum.</title>
        <authorList>
            <person name="Hartmann M."/>
            <person name="Barsch A."/>
            <person name="Niehaus K."/>
            <person name="Puhler A."/>
            <person name="Tauch A."/>
            <person name="Kalinowski J."/>
        </authorList>
    </citation>
    <scope>IDENTIFICATION BY MASS SPECTROMETRY</scope>
    <scope>GLYCOSYLATION</scope>
    <scope>SUBCELLULAR LOCATION</scope>
    <scope>POSSIBLE CLEAVAGE</scope>
    <scope>DISRUPTION PHENOTYPE</scope>
    <source>
        <strain>ATCC 13032 / DSM 20300 / JCM 1318 / BCRC 11384 / CCUG 27702 / LMG 3730 / NBRC 12168 / NCIMB 10025 / NRRL B-2784 / 534</strain>
    </source>
</reference>
<reference key="4">
    <citation type="journal article" date="2004" name="J. Bacteriol.">
        <title>RamB, a novel transcriptional regulator of genes involved in acetate metabolism of Corynebacterium glutamicum.</title>
        <authorList>
            <person name="Gerstmeir R."/>
            <person name="Cramer A."/>
            <person name="Dangel P."/>
            <person name="Schaffer S."/>
            <person name="Eikmanns B.J."/>
        </authorList>
    </citation>
    <scope>INDUCTION</scope>
    <source>
        <strain>ATCC 13032 / DSM 20300 / JCM 1318 / BCRC 11384 / CCUG 27702 / LMG 3730 / NBRC 12168 / NCIMB 10025 / NRRL B-2784 / 534</strain>
    </source>
</reference>
<reference key="5">
    <citation type="journal article" date="2006" name="FEMS Microbiol. Lett.">
        <title>The Corynebacterium glutamicum gene pmt encoding a glycosyltransferase related to eukaryotic protein-O-mannosyltransferases is essential for glycosylation of the resuscitation promoting factor (Rpf2) and other secreted proteins.</title>
        <authorList>
            <person name="Mahne M."/>
            <person name="Tauch A."/>
            <person name="Puhler A."/>
            <person name="Kalinowski J."/>
        </authorList>
    </citation>
    <scope>ISOFORMS</scope>
    <scope>SUBCELLULAR LOCATION</scope>
    <scope>GLYCOSYLATION</scope>
    <source>
        <strain>ATCC 13032 / DSM 20300 / JCM 1318 / BCRC 11384 / CCUG 27702 / LMG 3730 / NBRC 12168 / NCIMB 10025 / NRRL B-2784 / 534</strain>
    </source>
</reference>
<reference key="6">
    <citation type="journal article" date="2008" name="FEMS Microbiol. Lett.">
        <title>Triple transcriptional control of the resuscitation promoting factor 2 (rpf2) gene of Corynebacterium glutamicum by the regulators of acetate metabolism RamA and RamB and the cAMP-dependent regulator GlxR.</title>
        <authorList>
            <person name="Jungwirth B."/>
            <person name="Emer D."/>
            <person name="Brune I."/>
            <person name="Hansmeier N."/>
            <person name="Puehler A."/>
            <person name="Eikmanns B.J."/>
            <person name="Tauch A."/>
        </authorList>
    </citation>
    <scope>INDUCTION</scope>
    <source>
        <strain>ATCC 13032 / DSM 20300 / JCM 1318 / BCRC 11384 / CCUG 27702 / LMG 3730 / NBRC 12168 / NCIMB 10025 / NRRL B-2784 / 534</strain>
    </source>
</reference>
<dbReference type="EC" id="3.-.-.-"/>
<dbReference type="EMBL" id="BA000036">
    <property type="protein sequence ID" value="BAB98302.1"/>
    <property type="status" value="ALT_INIT"/>
    <property type="molecule type" value="Genomic_DNA"/>
</dbReference>
<dbReference type="EMBL" id="BX927150">
    <property type="protein sequence ID" value="CAF19615.1"/>
    <property type="molecule type" value="Genomic_DNA"/>
</dbReference>
<dbReference type="RefSeq" id="NP_600137.1">
    <property type="nucleotide sequence ID" value="NC_003450.3"/>
</dbReference>
<dbReference type="RefSeq" id="WP_003858490.1">
    <property type="nucleotide sequence ID" value="NC_006958.1"/>
</dbReference>
<dbReference type="SMR" id="Q6M6N7"/>
<dbReference type="STRING" id="196627.cg1037"/>
<dbReference type="CAZy" id="GH23">
    <property type="family name" value="Glycoside Hydrolase Family 23"/>
</dbReference>
<dbReference type="DNASU" id="3342641"/>
<dbReference type="GeneID" id="1018901"/>
<dbReference type="KEGG" id="cgb:cg1037"/>
<dbReference type="KEGG" id="cgl:Cgl0909"/>
<dbReference type="PATRIC" id="fig|196627.13.peg.894"/>
<dbReference type="eggNOG" id="COG3583">
    <property type="taxonomic scope" value="Bacteria"/>
</dbReference>
<dbReference type="HOGENOM" id="CLU_036884_1_0_11"/>
<dbReference type="OrthoDB" id="1404170at2"/>
<dbReference type="BioCyc" id="CORYNE:G18NG-10479-MONOMER"/>
<dbReference type="Proteomes" id="UP000000582">
    <property type="component" value="Chromosome"/>
</dbReference>
<dbReference type="Proteomes" id="UP000001009">
    <property type="component" value="Chromosome"/>
</dbReference>
<dbReference type="GO" id="GO:0009986">
    <property type="term" value="C:cell surface"/>
    <property type="evidence" value="ECO:0007669"/>
    <property type="project" value="UniProtKB-SubCell"/>
</dbReference>
<dbReference type="GO" id="GO:0005576">
    <property type="term" value="C:extracellular region"/>
    <property type="evidence" value="ECO:0007669"/>
    <property type="project" value="UniProtKB-SubCell"/>
</dbReference>
<dbReference type="GO" id="GO:0016787">
    <property type="term" value="F:hydrolase activity"/>
    <property type="evidence" value="ECO:0007669"/>
    <property type="project" value="UniProtKB-KW"/>
</dbReference>
<dbReference type="CDD" id="cd13925">
    <property type="entry name" value="RPF"/>
    <property type="match status" value="1"/>
</dbReference>
<dbReference type="Gene3D" id="1.10.530.10">
    <property type="match status" value="1"/>
</dbReference>
<dbReference type="Gene3D" id="2.20.230.10">
    <property type="entry name" value="Resuscitation-promoting factor rpfb"/>
    <property type="match status" value="1"/>
</dbReference>
<dbReference type="InterPro" id="IPR007137">
    <property type="entry name" value="DUF348"/>
</dbReference>
<dbReference type="InterPro" id="IPR011098">
    <property type="entry name" value="G5_dom"/>
</dbReference>
<dbReference type="InterPro" id="IPR023346">
    <property type="entry name" value="Lysozyme-like_dom_sf"/>
</dbReference>
<dbReference type="InterPro" id="IPR010618">
    <property type="entry name" value="RPF"/>
</dbReference>
<dbReference type="Pfam" id="PF03990">
    <property type="entry name" value="DUF348"/>
    <property type="match status" value="3"/>
</dbReference>
<dbReference type="Pfam" id="PF07501">
    <property type="entry name" value="G5"/>
    <property type="match status" value="1"/>
</dbReference>
<dbReference type="Pfam" id="PF06737">
    <property type="entry name" value="Transglycosylas"/>
    <property type="match status" value="1"/>
</dbReference>
<dbReference type="SMART" id="SM01208">
    <property type="entry name" value="G5"/>
    <property type="match status" value="1"/>
</dbReference>
<dbReference type="SUPFAM" id="SSF53955">
    <property type="entry name" value="Lysozyme-like"/>
    <property type="match status" value="1"/>
</dbReference>
<dbReference type="PROSITE" id="PS51109">
    <property type="entry name" value="G5"/>
    <property type="match status" value="1"/>
</dbReference>
<accession>Q6M6N7</accession>
<accession>Q8NRY2</accession>
<keyword id="KW-0325">Glycoprotein</keyword>
<keyword id="KW-0378">Hydrolase</keyword>
<keyword id="KW-1185">Reference proteome</keyword>
<keyword id="KW-0964">Secreted</keyword>
<keyword id="KW-0732">Signal</keyword>
<organism>
    <name type="scientific">Corynebacterium glutamicum (strain ATCC 13032 / DSM 20300 / JCM 1318 / BCRC 11384 / CCUG 27702 / LMG 3730 / NBRC 12168 / NCIMB 10025 / NRRL B-2784 / 534)</name>
    <dbReference type="NCBI Taxonomy" id="196627"/>
    <lineage>
        <taxon>Bacteria</taxon>
        <taxon>Bacillati</taxon>
        <taxon>Actinomycetota</taxon>
        <taxon>Actinomycetes</taxon>
        <taxon>Mycobacteriales</taxon>
        <taxon>Corynebacteriaceae</taxon>
        <taxon>Corynebacterium</taxon>
    </lineage>
</organism>
<evidence type="ECO:0000250" key="1"/>
<evidence type="ECO:0000255" key="2"/>
<evidence type="ECO:0000255" key="3">
    <source>
        <dbReference type="PROSITE-ProRule" id="PRU00437"/>
    </source>
</evidence>
<evidence type="ECO:0000256" key="4">
    <source>
        <dbReference type="SAM" id="MobiDB-lite"/>
    </source>
</evidence>
<evidence type="ECO:0000269" key="5">
    <source>
    </source>
</evidence>
<evidence type="ECO:0000269" key="6">
    <source>
    </source>
</evidence>
<evidence type="ECO:0000269" key="7">
    <source>
    </source>
</evidence>
<evidence type="ECO:0000269" key="8">
    <source>
    </source>
</evidence>
<evidence type="ECO:0000305" key="9"/>
<feature type="signal peptide" evidence="2">
    <location>
        <begin position="1"/>
        <end position="40"/>
    </location>
</feature>
<feature type="chain" id="PRO_0000421070" description="Resuscitation-promoting factor Rpf2">
    <location>
        <begin position="41"/>
        <end position="374"/>
    </location>
</feature>
<feature type="domain" description="G5" evidence="3">
    <location>
        <begin position="210"/>
        <end position="290"/>
    </location>
</feature>
<feature type="region of interest" description="Disordered" evidence="4">
    <location>
        <begin position="228"/>
        <end position="252"/>
    </location>
</feature>
<proteinExistence type="evidence at protein level"/>
<sequence>MAPHQKSRINRINSTRSVPLRLATGGVLATLLIGGVTAAATKKDIIVDVNGEQMSLVTMSGTVEGVLAQAGVELGDQDIVSPSLDSSISDEDTVTVRTAKQVALVVEGQIQNVTTTAVSVEDLLQEVGGITGADAVDADLSETIPESGLKVSVTKPKIISINDGGKVTYVSLAAQNVQEALELRDIELGAQDRINVPLDQQLKNNAAIQIDRVDNTEITETVSFDAEPTYVDDPEAPAGDETVVEEGAPGTKEVTRTVTTVNGQEESSTVINEVEITAAKPATISRGTKTVAANSVWDQLAQCESGGNWAINTGNGFSGGLQFHPQTWLAYGGGAFSGDASGASREQQISIAEKVQAAQGWGAWPACTASLGIR</sequence>
<gene>
    <name type="primary">rpf2</name>
    <name type="ordered locus">Cgl0909</name>
    <name type="ordered locus">cg1037</name>
</gene>
<name>RPF2_CORGL</name>
<comment type="function">
    <text evidence="1">Factor that stimulates resuscitation of dormant cells. Has peptidoglycan (PG) hydrolytic activity. Active in the pM concentration range. Has little to no effect on actively-growing cells. PG fragments could either directly activate the resuscitation pathway of dormant bacteria or serve as a substrate for endogenous Rpf, resulting in low molecular weight products with resuscitation activity (By similarity).</text>
</comment>
<comment type="subcellular location">
    <subcellularLocation>
        <location>Secreted</location>
    </subcellularLocation>
    <subcellularLocation>
        <location evidence="9">Cell surface</location>
    </subcellularLocation>
</comment>
<comment type="induction">
    <text evidence="5 8">Activated by RamA and repressed by RamB.</text>
</comment>
<comment type="PTM">
    <text evidence="6 7">Glycosylated; by Pmt, by at least mannose and galactose. Other unidentified sugars may also be present.</text>
</comment>
<comment type="PTM">
    <text>May be subject to proteolytic cleavage as multiple shorter forms are detected in gels.</text>
</comment>
<comment type="PTM">
    <text evidence="7">At least 3 non-glycosylated protein isoforms of 35, 40 and 42 kDa are seen in gels.</text>
</comment>
<comment type="disruption phenotype">
    <text evidence="6">Not essential; a double rpf1-rpf2 disruption mutant is also viable. The double mutant displays a prolonged lag phase and slower growth after transfer of long-stored cells into fresh medium.</text>
</comment>
<comment type="similarity">
    <text evidence="9">Belongs to the transglycosylase family. Rpf subfamily.</text>
</comment>
<comment type="sequence caution" evidence="9">
    <conflict type="erroneous initiation">
        <sequence resource="EMBL-CDS" id="BAB98302"/>
    </conflict>
    <text>Truncated N-terminus.</text>
</comment>